<accession>Q1D8S7</accession>
<gene>
    <name evidence="1" type="primary">nuoD</name>
    <name type="ordered locus">MXAN_2729</name>
</gene>
<dbReference type="EC" id="7.1.1.-" evidence="1"/>
<dbReference type="EMBL" id="CP000113">
    <property type="protein sequence ID" value="ABF87491.1"/>
    <property type="molecule type" value="Genomic_DNA"/>
</dbReference>
<dbReference type="RefSeq" id="WP_011552796.1">
    <property type="nucleotide sequence ID" value="NC_008095.1"/>
</dbReference>
<dbReference type="SMR" id="Q1D8S7"/>
<dbReference type="STRING" id="246197.MXAN_2729"/>
<dbReference type="EnsemblBacteria" id="ABF87491">
    <property type="protein sequence ID" value="ABF87491"/>
    <property type="gene ID" value="MXAN_2729"/>
</dbReference>
<dbReference type="GeneID" id="41360106"/>
<dbReference type="KEGG" id="mxa:MXAN_2729"/>
<dbReference type="eggNOG" id="COG0649">
    <property type="taxonomic scope" value="Bacteria"/>
</dbReference>
<dbReference type="HOGENOM" id="CLU_015134_1_2_7"/>
<dbReference type="OrthoDB" id="9801496at2"/>
<dbReference type="Proteomes" id="UP000002402">
    <property type="component" value="Chromosome"/>
</dbReference>
<dbReference type="GO" id="GO:0005886">
    <property type="term" value="C:plasma membrane"/>
    <property type="evidence" value="ECO:0007669"/>
    <property type="project" value="UniProtKB-SubCell"/>
</dbReference>
<dbReference type="GO" id="GO:0051287">
    <property type="term" value="F:NAD binding"/>
    <property type="evidence" value="ECO:0007669"/>
    <property type="project" value="InterPro"/>
</dbReference>
<dbReference type="GO" id="GO:0050136">
    <property type="term" value="F:NADH:ubiquinone reductase (non-electrogenic) activity"/>
    <property type="evidence" value="ECO:0007669"/>
    <property type="project" value="UniProtKB-UniRule"/>
</dbReference>
<dbReference type="GO" id="GO:0048038">
    <property type="term" value="F:quinone binding"/>
    <property type="evidence" value="ECO:0007669"/>
    <property type="project" value="UniProtKB-KW"/>
</dbReference>
<dbReference type="Gene3D" id="1.10.645.10">
    <property type="entry name" value="Cytochrome-c3 Hydrogenase, chain B"/>
    <property type="match status" value="1"/>
</dbReference>
<dbReference type="HAMAP" id="MF_01358">
    <property type="entry name" value="NDH1_NuoD"/>
    <property type="match status" value="1"/>
</dbReference>
<dbReference type="InterPro" id="IPR001135">
    <property type="entry name" value="NADH_Q_OxRdtase_suD"/>
</dbReference>
<dbReference type="InterPro" id="IPR022885">
    <property type="entry name" value="NDH1_su_D/H"/>
</dbReference>
<dbReference type="InterPro" id="IPR029014">
    <property type="entry name" value="NiFe-Hase_large"/>
</dbReference>
<dbReference type="NCBIfam" id="TIGR01962">
    <property type="entry name" value="NuoD"/>
    <property type="match status" value="1"/>
</dbReference>
<dbReference type="NCBIfam" id="NF004739">
    <property type="entry name" value="PRK06075.1"/>
    <property type="match status" value="1"/>
</dbReference>
<dbReference type="PANTHER" id="PTHR11993:SF10">
    <property type="entry name" value="NADH DEHYDROGENASE [UBIQUINONE] IRON-SULFUR PROTEIN 2, MITOCHONDRIAL"/>
    <property type="match status" value="1"/>
</dbReference>
<dbReference type="PANTHER" id="PTHR11993">
    <property type="entry name" value="NADH-UBIQUINONE OXIDOREDUCTASE 49 KDA SUBUNIT"/>
    <property type="match status" value="1"/>
</dbReference>
<dbReference type="Pfam" id="PF00346">
    <property type="entry name" value="Complex1_49kDa"/>
    <property type="match status" value="1"/>
</dbReference>
<dbReference type="SUPFAM" id="SSF56762">
    <property type="entry name" value="HydB/Nqo4-like"/>
    <property type="match status" value="1"/>
</dbReference>
<reference key="1">
    <citation type="journal article" date="2006" name="Proc. Natl. Acad. Sci. U.S.A.">
        <title>Evolution of sensory complexity recorded in a myxobacterial genome.</title>
        <authorList>
            <person name="Goldman B.S."/>
            <person name="Nierman W.C."/>
            <person name="Kaiser D."/>
            <person name="Slater S.C."/>
            <person name="Durkin A.S."/>
            <person name="Eisen J.A."/>
            <person name="Ronning C.M."/>
            <person name="Barbazuk W.B."/>
            <person name="Blanchard M."/>
            <person name="Field C."/>
            <person name="Halling C."/>
            <person name="Hinkle G."/>
            <person name="Iartchuk O."/>
            <person name="Kim H.S."/>
            <person name="Mackenzie C."/>
            <person name="Madupu R."/>
            <person name="Miller N."/>
            <person name="Shvartsbeyn A."/>
            <person name="Sullivan S.A."/>
            <person name="Vaudin M."/>
            <person name="Wiegand R."/>
            <person name="Kaplan H.B."/>
        </authorList>
    </citation>
    <scope>NUCLEOTIDE SEQUENCE [LARGE SCALE GENOMIC DNA]</scope>
    <source>
        <strain>DK1622</strain>
    </source>
</reference>
<name>NUOD_MYXXD</name>
<feature type="chain" id="PRO_0000371891" description="NADH-quinone oxidoreductase subunit D">
    <location>
        <begin position="1"/>
        <end position="415"/>
    </location>
</feature>
<keyword id="KW-0997">Cell inner membrane</keyword>
<keyword id="KW-1003">Cell membrane</keyword>
<keyword id="KW-0472">Membrane</keyword>
<keyword id="KW-0520">NAD</keyword>
<keyword id="KW-0874">Quinone</keyword>
<keyword id="KW-1185">Reference proteome</keyword>
<keyword id="KW-1278">Translocase</keyword>
<keyword id="KW-0813">Transport</keyword>
<keyword id="KW-0830">Ubiquinone</keyword>
<proteinExistence type="inferred from homology"/>
<sequence>MADTLKPEAPNPDTDAYAHESELDAHLQTKRMVINMGPSHPATHGTVRLKVELEGETIVKIDPEIGFLHRGFQKSCENVTWTQCLPYTDRLNYLSAMMNNFGFLNAVEKLIGLEIPERAQYIRVIGSELHRLTDHLTCVGATGLEMGGFAPFLLAMEFRELLHDRTAELTGARLTTSFGRVGGSNRDLPEGWIPRVHKTLDQGLALLDEMEGLLTNNRIFVDRTKGTGVISAEDAIEYGYTGPALRACGVDYDIRKTKPYWVYDRFDFDIPVGEHGDNYDRYLVRLEEMRQSIRILRQAMDTIPAGPIIVDDWRIALPPKPEVYGTIEGVMSHFKLVMEGIQVPAGEVYDATEASNGELGWYLVSDGRGRPYKVHVRAPGFPVLAAVPHIIEGKMLADLIPTFDTINMIGGEVEQ</sequence>
<comment type="function">
    <text evidence="1">NDH-1 shuttles electrons from NADH, via FMN and iron-sulfur (Fe-S) centers, to quinones in the respiratory chain. The immediate electron acceptor for the enzyme in this species is believed to be ubiquinone. Couples the redox reaction to proton translocation (for every two electrons transferred, four hydrogen ions are translocated across the cytoplasmic membrane), and thus conserves the redox energy in a proton gradient.</text>
</comment>
<comment type="catalytic activity">
    <reaction evidence="1">
        <text>a quinone + NADH + 5 H(+)(in) = a quinol + NAD(+) + 4 H(+)(out)</text>
        <dbReference type="Rhea" id="RHEA:57888"/>
        <dbReference type="ChEBI" id="CHEBI:15378"/>
        <dbReference type="ChEBI" id="CHEBI:24646"/>
        <dbReference type="ChEBI" id="CHEBI:57540"/>
        <dbReference type="ChEBI" id="CHEBI:57945"/>
        <dbReference type="ChEBI" id="CHEBI:132124"/>
    </reaction>
</comment>
<comment type="subunit">
    <text evidence="1">NDH-1 is composed of 14 different subunits. Subunits NuoB, C, D, E, F, and G constitute the peripheral sector of the complex.</text>
</comment>
<comment type="subcellular location">
    <subcellularLocation>
        <location evidence="1">Cell inner membrane</location>
        <topology evidence="1">Peripheral membrane protein</topology>
        <orientation evidence="1">Cytoplasmic side</orientation>
    </subcellularLocation>
</comment>
<comment type="similarity">
    <text evidence="1">Belongs to the complex I 49 kDa subunit family.</text>
</comment>
<organism>
    <name type="scientific">Myxococcus xanthus (strain DK1622)</name>
    <dbReference type="NCBI Taxonomy" id="246197"/>
    <lineage>
        <taxon>Bacteria</taxon>
        <taxon>Pseudomonadati</taxon>
        <taxon>Myxococcota</taxon>
        <taxon>Myxococcia</taxon>
        <taxon>Myxococcales</taxon>
        <taxon>Cystobacterineae</taxon>
        <taxon>Myxococcaceae</taxon>
        <taxon>Myxococcus</taxon>
    </lineage>
</organism>
<evidence type="ECO:0000255" key="1">
    <source>
        <dbReference type="HAMAP-Rule" id="MF_01358"/>
    </source>
</evidence>
<protein>
    <recommendedName>
        <fullName evidence="1">NADH-quinone oxidoreductase subunit D</fullName>
        <ecNumber evidence="1">7.1.1.-</ecNumber>
    </recommendedName>
    <alternativeName>
        <fullName evidence="1">NADH dehydrogenase I subunit D</fullName>
    </alternativeName>
    <alternativeName>
        <fullName evidence="1">NDH-1 subunit D</fullName>
    </alternativeName>
</protein>